<sequence length="566" mass="63864">MEIIFGQNKKEQLEPVQAKVTGSIPAWLQGTLLRNGPGMHTVGESKYNHWFDGLALLHSFSIRDGEVFYRSKYLQSDTYIANIEANRIVVSEFGTMAYPDPCKNIFSKAFSYLSHTIPDFTDNCLINIMKCGEDFYATTETNYIRKIDPQTLETLEKVDYRKYVAVNLATSHPHYDEAGNVLNMGTSVVDKGRTKYVIFKIPATVPDSKKKGKSPVKHAEVFCSISSRSLLSPSYYHSFGVTENYVVFLEQPFKLDILKMATAYMRGVSWASCMSFDREDKTYIHIIDQRTRKPVPTKFYTDPMVVFHHVNAYEEDGCVLFDVIAYEDSSLYQLFYLANLNKDFEEKSRLTSVPTLRRFAVPLHVDKDAEVGSNLVKVSSTTATALKEKDGHVYCQPEVLYEGLELPRINYAYNGKPYRYIFAAEVQWSPVPTKILKYDILTKSSLKWSEESCWPAEPLFVPTPGAKDEDDGVILSAIVSTDPQKLPFLLILDAKSFTELARASVDADMHLDLHGLFIPDADWNAVKQTPAETQEVENSDHPTDPTAPELSHSENDFTAGHGGSSL</sequence>
<feature type="chain" id="PRO_0000143934" description="Beta,beta-carotene 15,15'-dioxygenase">
    <location>
        <begin position="1"/>
        <end position="566"/>
    </location>
</feature>
<feature type="region of interest" description="Disordered" evidence="2">
    <location>
        <begin position="530"/>
        <end position="566"/>
    </location>
</feature>
<feature type="binding site" evidence="7">
    <location>
        <position position="172"/>
    </location>
    <ligand>
        <name>Fe cation</name>
        <dbReference type="ChEBI" id="CHEBI:24875"/>
        <note>catalytic</note>
    </ligand>
</feature>
<feature type="binding site" evidence="7">
    <location>
        <position position="237"/>
    </location>
    <ligand>
        <name>Fe cation</name>
        <dbReference type="ChEBI" id="CHEBI:24875"/>
        <note>catalytic</note>
    </ligand>
</feature>
<feature type="binding site" evidence="7">
    <location>
        <position position="308"/>
    </location>
    <ligand>
        <name>Fe cation</name>
        <dbReference type="ChEBI" id="CHEBI:24875"/>
        <note>catalytic</note>
    </ligand>
</feature>
<feature type="binding site" evidence="7">
    <location>
        <position position="514"/>
    </location>
    <ligand>
        <name>Fe cation</name>
        <dbReference type="ChEBI" id="CHEBI:24875"/>
        <note>catalytic</note>
    </ligand>
</feature>
<feature type="mutagenesis site" description="No significant effect on beta-carotene 15,15'-monooxygenase activity. Decreased stability." evidence="4">
    <original>H</original>
    <variation>A</variation>
    <location>
        <position position="49"/>
    </location>
</feature>
<feature type="mutagenesis site" description="Decreased beta-carotene 15,15'-monooxygenase activity. Decreased catalytic efficiency. Loss of beta-carotene 15,15'-monooxygenase activity; when associated with A-140." evidence="4">
    <original>D</original>
    <variation>A</variation>
    <location>
        <position position="52"/>
    </location>
</feature>
<feature type="mutagenesis site" description="No significant effect on beta-carotene 15,15'-monooxygenase activity. Decreased catalytic efficiency." evidence="4">
    <original>H</original>
    <variation>A</variation>
    <location>
        <position position="58"/>
    </location>
</feature>
<feature type="mutagenesis site" description="Decreased beta-carotene 15,15'-monooxygenase activity. Decreased catalytic efficiency. Loss of beta-carotene 15,15'-monooxygenase activity; when associated with A-52." evidence="4">
    <original>E</original>
    <variation>A</variation>
    <location>
        <position position="140"/>
    </location>
</feature>
<feature type="mutagenesis site" description="No effect on protein abundance. Loss of beta-carotene 15,15'-monooxygenase activity. Decreased iron binding." evidence="4">
    <original>H</original>
    <variation>A</variation>
    <location>
        <position position="172"/>
    </location>
</feature>
<feature type="mutagenesis site" description="No significant effect on beta-carotene 15,15'-monooxygenase activity." evidence="4">
    <original>H</original>
    <variation>A</variation>
    <location>
        <position position="174"/>
    </location>
</feature>
<feature type="mutagenesis site" description="No effect on protein abundance. Loss of beta-carotene 15,15'-monooxygenase activity. Decreased iron binding." evidence="4">
    <original>H</original>
    <variation>A</variation>
    <location>
        <position position="237"/>
    </location>
</feature>
<feature type="mutagenesis site" description="No effect on protein abundance. Loss of beta-carotene 15,15'-monooxygenase activity. Decreased iron binding." evidence="4">
    <original>H</original>
    <variation>A</variation>
    <location>
        <position position="308"/>
    </location>
</feature>
<feature type="mutagenesis site" description="No significant effect on beta-carotene 15,15'-monooxygenase activity." evidence="4">
    <original>H</original>
    <variation>A</variation>
    <location>
        <position position="309"/>
    </location>
</feature>
<feature type="mutagenesis site" description="No significant effect on beta-carotene 15,15'-monooxygenase activity." evidence="4">
    <original>E</original>
    <variation>A</variation>
    <location>
        <position position="314"/>
    </location>
</feature>
<feature type="mutagenesis site" description="Loss of beta-carotene 15,15'-monooxygenase activity." evidence="4">
    <original>E</original>
    <variation>A</variation>
    <location>
        <position position="405"/>
    </location>
</feature>
<feature type="mutagenesis site" description="No significant effect on beta-carotene 15,15'-monooxygenase activity." evidence="4">
    <original>E</original>
    <variation>A</variation>
    <location>
        <position position="450"/>
    </location>
</feature>
<feature type="mutagenesis site" description="Decreased beta-carotene 15,15'-monooxygenase activity." evidence="4">
    <original>E</original>
    <variation>A</variation>
    <location>
        <position position="457"/>
    </location>
</feature>
<feature type="mutagenesis site" description="Decreased beta-carotene 15,15'-monooxygenase activity." evidence="4">
    <original>E</original>
    <variation>A</variation>
    <location>
        <position position="469"/>
    </location>
</feature>
<feature type="mutagenesis site" description="No effect on protein abundance. Loss of beta-carotene 15,15'-monooxygenase activity. Loss of iron binding." evidence="4">
    <original>H</original>
    <variation>A</variation>
    <location>
        <position position="514"/>
    </location>
</feature>
<feature type="sequence conflict" description="In Ref. 2; AAG15381." evidence="5" ref="2">
    <original>I</original>
    <variation>T</variation>
    <location>
        <position position="409"/>
    </location>
</feature>
<organism>
    <name type="scientific">Mus musculus</name>
    <name type="common">Mouse</name>
    <dbReference type="NCBI Taxonomy" id="10090"/>
    <lineage>
        <taxon>Eukaryota</taxon>
        <taxon>Metazoa</taxon>
        <taxon>Chordata</taxon>
        <taxon>Craniata</taxon>
        <taxon>Vertebrata</taxon>
        <taxon>Euteleostomi</taxon>
        <taxon>Mammalia</taxon>
        <taxon>Eutheria</taxon>
        <taxon>Euarchontoglires</taxon>
        <taxon>Glires</taxon>
        <taxon>Rodentia</taxon>
        <taxon>Myomorpha</taxon>
        <taxon>Muroidea</taxon>
        <taxon>Muridae</taxon>
        <taxon>Murinae</taxon>
        <taxon>Mus</taxon>
        <taxon>Mus</taxon>
    </lineage>
</organism>
<protein>
    <recommendedName>
        <fullName evidence="6">Beta,beta-carotene 15,15'-dioxygenase</fullName>
        <ecNumber evidence="3 4">1.13.11.63</ecNumber>
    </recommendedName>
    <alternativeName>
        <fullName>Beta-carotene dioxygenase 1</fullName>
    </alternativeName>
    <alternativeName>
        <fullName evidence="8">Beta-carotene oxygenase 1</fullName>
    </alternativeName>
</protein>
<gene>
    <name evidence="8" type="primary">Bco1</name>
    <name type="synonym">Bcdo</name>
    <name type="synonym">Bcdo1</name>
    <name evidence="8" type="synonym">Bcmo1</name>
</gene>
<name>BCDO1_MOUSE</name>
<accession>Q9JJS6</accession>
<accession>Q6K1L5</accession>
<accession>Q8C6N5</accession>
<accession>Q9ERN9</accession>
<reference key="1">
    <citation type="journal article" date="2001" name="Biochem. J.">
        <title>Expression pattern and localization of beta,beta-carotene 15,15'-dioxygenase in different tissues.</title>
        <authorList>
            <person name="Wyss A."/>
            <person name="Wirtz G.M."/>
            <person name="Woggon W.D."/>
            <person name="Brugger R."/>
            <person name="Wyss M."/>
            <person name="Friedlein A."/>
            <person name="Riss G."/>
            <person name="Bachmann H."/>
            <person name="Hunziker W."/>
        </authorList>
    </citation>
    <scope>NUCLEOTIDE SEQUENCE [MRNA]</scope>
    <source>
        <strain>C57BL/6J</strain>
        <tissue>Kidney</tissue>
    </source>
</reference>
<reference key="2">
    <citation type="journal article" date="2001" name="Genomics">
        <title>Cloning and characterization of a human beta,beta-carotene-15,15-prime dioxygenase that is highly expressed in the retinal pigment epithelium.</title>
        <authorList>
            <person name="Yan W."/>
            <person name="Jang G.-F."/>
            <person name="Haeseleer F."/>
            <person name="Esumi N."/>
            <person name="Chang J."/>
            <person name="Kerrigan M."/>
            <person name="Campochiaro M."/>
            <person name="Campochiaro P."/>
            <person name="Palczewski K."/>
            <person name="Zack D.J."/>
        </authorList>
    </citation>
    <scope>NUCLEOTIDE SEQUENCE [MRNA]</scope>
    <source>
        <strain>C57BL/6J</strain>
        <tissue>Kidney</tissue>
    </source>
</reference>
<reference key="3">
    <citation type="journal article" date="2001" name="J. Biol. Chem.">
        <title>Identification, expression, and substrate specificity of a mammalian beta-carotene 15,15'-dioxygenase.</title>
        <authorList>
            <person name="Redmond T.M."/>
            <person name="Gentleman S."/>
            <person name="Duncan T."/>
            <person name="Yu S."/>
            <person name="Wiggert B."/>
            <person name="Gantt E."/>
            <person name="Cunningham F.X. Jr."/>
        </authorList>
    </citation>
    <scope>NUCLEOTIDE SEQUENCE [MRNA]</scope>
    <scope>FUNCTION</scope>
    <scope>CATALYTIC ACTIVITY</scope>
    <scope>BIOPHYSICOCHEMICAL PROPERTIES</scope>
    <scope>TISSUE SPECIFICITY</scope>
    <scope>DEVELOPMENTAL STAGE</scope>
    <source>
        <strain>C57BL/6J</strain>
    </source>
</reference>
<reference key="4">
    <citation type="journal article" date="2003" name="FASEB J.">
        <title>Identification of beta-carotene 15,15'-monooxygenase as a peroxisome proliferator-activated receptor target gene.</title>
        <authorList>
            <person name="Boulanger A."/>
            <person name="McLemore P."/>
            <person name="Copeland N.G."/>
            <person name="Gilbert D.J."/>
            <person name="Jenkins N.A."/>
            <person name="Yu S.S."/>
            <person name="Gentleman S."/>
            <person name="Redmond T.M."/>
        </authorList>
    </citation>
    <scope>NUCLEOTIDE SEQUENCE [GENOMIC DNA]</scope>
    <source>
        <strain>129/Sv</strain>
    </source>
</reference>
<reference key="5">
    <citation type="journal article" date="2005" name="Science">
        <title>The transcriptional landscape of the mammalian genome.</title>
        <authorList>
            <person name="Carninci P."/>
            <person name="Kasukawa T."/>
            <person name="Katayama S."/>
            <person name="Gough J."/>
            <person name="Frith M.C."/>
            <person name="Maeda N."/>
            <person name="Oyama R."/>
            <person name="Ravasi T."/>
            <person name="Lenhard B."/>
            <person name="Wells C."/>
            <person name="Kodzius R."/>
            <person name="Shimokawa K."/>
            <person name="Bajic V.B."/>
            <person name="Brenner S.E."/>
            <person name="Batalov S."/>
            <person name="Forrest A.R."/>
            <person name="Zavolan M."/>
            <person name="Davis M.J."/>
            <person name="Wilming L.G."/>
            <person name="Aidinis V."/>
            <person name="Allen J.E."/>
            <person name="Ambesi-Impiombato A."/>
            <person name="Apweiler R."/>
            <person name="Aturaliya R.N."/>
            <person name="Bailey T.L."/>
            <person name="Bansal M."/>
            <person name="Baxter L."/>
            <person name="Beisel K.W."/>
            <person name="Bersano T."/>
            <person name="Bono H."/>
            <person name="Chalk A.M."/>
            <person name="Chiu K.P."/>
            <person name="Choudhary V."/>
            <person name="Christoffels A."/>
            <person name="Clutterbuck D.R."/>
            <person name="Crowe M.L."/>
            <person name="Dalla E."/>
            <person name="Dalrymple B.P."/>
            <person name="de Bono B."/>
            <person name="Della Gatta G."/>
            <person name="di Bernardo D."/>
            <person name="Down T."/>
            <person name="Engstrom P."/>
            <person name="Fagiolini M."/>
            <person name="Faulkner G."/>
            <person name="Fletcher C.F."/>
            <person name="Fukushima T."/>
            <person name="Furuno M."/>
            <person name="Futaki S."/>
            <person name="Gariboldi M."/>
            <person name="Georgii-Hemming P."/>
            <person name="Gingeras T.R."/>
            <person name="Gojobori T."/>
            <person name="Green R.E."/>
            <person name="Gustincich S."/>
            <person name="Harbers M."/>
            <person name="Hayashi Y."/>
            <person name="Hensch T.K."/>
            <person name="Hirokawa N."/>
            <person name="Hill D."/>
            <person name="Huminiecki L."/>
            <person name="Iacono M."/>
            <person name="Ikeo K."/>
            <person name="Iwama A."/>
            <person name="Ishikawa T."/>
            <person name="Jakt M."/>
            <person name="Kanapin A."/>
            <person name="Katoh M."/>
            <person name="Kawasawa Y."/>
            <person name="Kelso J."/>
            <person name="Kitamura H."/>
            <person name="Kitano H."/>
            <person name="Kollias G."/>
            <person name="Krishnan S.P."/>
            <person name="Kruger A."/>
            <person name="Kummerfeld S.K."/>
            <person name="Kurochkin I.V."/>
            <person name="Lareau L.F."/>
            <person name="Lazarevic D."/>
            <person name="Lipovich L."/>
            <person name="Liu J."/>
            <person name="Liuni S."/>
            <person name="McWilliam S."/>
            <person name="Madan Babu M."/>
            <person name="Madera M."/>
            <person name="Marchionni L."/>
            <person name="Matsuda H."/>
            <person name="Matsuzawa S."/>
            <person name="Miki H."/>
            <person name="Mignone F."/>
            <person name="Miyake S."/>
            <person name="Morris K."/>
            <person name="Mottagui-Tabar S."/>
            <person name="Mulder N."/>
            <person name="Nakano N."/>
            <person name="Nakauchi H."/>
            <person name="Ng P."/>
            <person name="Nilsson R."/>
            <person name="Nishiguchi S."/>
            <person name="Nishikawa S."/>
            <person name="Nori F."/>
            <person name="Ohara O."/>
            <person name="Okazaki Y."/>
            <person name="Orlando V."/>
            <person name="Pang K.C."/>
            <person name="Pavan W.J."/>
            <person name="Pavesi G."/>
            <person name="Pesole G."/>
            <person name="Petrovsky N."/>
            <person name="Piazza S."/>
            <person name="Reed J."/>
            <person name="Reid J.F."/>
            <person name="Ring B.Z."/>
            <person name="Ringwald M."/>
            <person name="Rost B."/>
            <person name="Ruan Y."/>
            <person name="Salzberg S.L."/>
            <person name="Sandelin A."/>
            <person name="Schneider C."/>
            <person name="Schoenbach C."/>
            <person name="Sekiguchi K."/>
            <person name="Semple C.A."/>
            <person name="Seno S."/>
            <person name="Sessa L."/>
            <person name="Sheng Y."/>
            <person name="Shibata Y."/>
            <person name="Shimada H."/>
            <person name="Shimada K."/>
            <person name="Silva D."/>
            <person name="Sinclair B."/>
            <person name="Sperling S."/>
            <person name="Stupka E."/>
            <person name="Sugiura K."/>
            <person name="Sultana R."/>
            <person name="Takenaka Y."/>
            <person name="Taki K."/>
            <person name="Tammoja K."/>
            <person name="Tan S.L."/>
            <person name="Tang S."/>
            <person name="Taylor M.S."/>
            <person name="Tegner J."/>
            <person name="Teichmann S.A."/>
            <person name="Ueda H.R."/>
            <person name="van Nimwegen E."/>
            <person name="Verardo R."/>
            <person name="Wei C.L."/>
            <person name="Yagi K."/>
            <person name="Yamanishi H."/>
            <person name="Zabarovsky E."/>
            <person name="Zhu S."/>
            <person name="Zimmer A."/>
            <person name="Hide W."/>
            <person name="Bult C."/>
            <person name="Grimmond S.M."/>
            <person name="Teasdale R.D."/>
            <person name="Liu E.T."/>
            <person name="Brusic V."/>
            <person name="Quackenbush J."/>
            <person name="Wahlestedt C."/>
            <person name="Mattick J.S."/>
            <person name="Hume D.A."/>
            <person name="Kai C."/>
            <person name="Sasaki D."/>
            <person name="Tomaru Y."/>
            <person name="Fukuda S."/>
            <person name="Kanamori-Katayama M."/>
            <person name="Suzuki M."/>
            <person name="Aoki J."/>
            <person name="Arakawa T."/>
            <person name="Iida J."/>
            <person name="Imamura K."/>
            <person name="Itoh M."/>
            <person name="Kato T."/>
            <person name="Kawaji H."/>
            <person name="Kawagashira N."/>
            <person name="Kawashima T."/>
            <person name="Kojima M."/>
            <person name="Kondo S."/>
            <person name="Konno H."/>
            <person name="Nakano K."/>
            <person name="Ninomiya N."/>
            <person name="Nishio T."/>
            <person name="Okada M."/>
            <person name="Plessy C."/>
            <person name="Shibata K."/>
            <person name="Shiraki T."/>
            <person name="Suzuki S."/>
            <person name="Tagami M."/>
            <person name="Waki K."/>
            <person name="Watahiki A."/>
            <person name="Okamura-Oho Y."/>
            <person name="Suzuki H."/>
            <person name="Kawai J."/>
            <person name="Hayashizaki Y."/>
        </authorList>
    </citation>
    <scope>NUCLEOTIDE SEQUENCE [LARGE SCALE MRNA] OF 29-483</scope>
    <source>
        <strain>C57BL/6J</strain>
        <tissue>Oviduct</tissue>
    </source>
</reference>
<reference key="6">
    <citation type="journal article" date="2005" name="J. Biol. Chem.">
        <title>Key role of conserved histidines in recombinant mouse beta-carotene 15,15'-monooxygenase-1 activity.</title>
        <authorList>
            <person name="Poliakov E."/>
            <person name="Gentleman S."/>
            <person name="Cunningham F.X. Jr."/>
            <person name="Miller-Ihli N.J."/>
            <person name="Redmond T.M."/>
        </authorList>
    </citation>
    <scope>FUNCTION</scope>
    <scope>CATALYTIC ACTIVITY</scope>
    <scope>BIOPHYSICOCHEMICAL PROPERTIES</scope>
    <scope>COFACTOR</scope>
    <scope>PATHWAY</scope>
    <scope>MUTAGENESIS OF HIS-49; ASP-52; HIS-58; GLU-140; HIS-172; HIS-174; HIS-237; HIS-308; HIS-309; GLU-314; GLU-405; GLU-450; GLU-457; GLU-469 AND HIS-514</scope>
</reference>
<evidence type="ECO:0000250" key="1">
    <source>
        <dbReference type="UniProtKB" id="Q9I993"/>
    </source>
</evidence>
<evidence type="ECO:0000256" key="2">
    <source>
        <dbReference type="SAM" id="MobiDB-lite"/>
    </source>
</evidence>
<evidence type="ECO:0000269" key="3">
    <source>
    </source>
</evidence>
<evidence type="ECO:0000269" key="4">
    <source>
    </source>
</evidence>
<evidence type="ECO:0000305" key="5"/>
<evidence type="ECO:0000305" key="6">
    <source>
    </source>
</evidence>
<evidence type="ECO:0000305" key="7">
    <source>
    </source>
</evidence>
<evidence type="ECO:0000312" key="8">
    <source>
        <dbReference type="MGI" id="MGI:1926923"/>
    </source>
</evidence>
<proteinExistence type="evidence at protein level"/>
<comment type="function">
    <text evidence="3 4">Symmetrically cleaves beta-carotene into two molecules of retinal using a dioxygenase mechanism.</text>
</comment>
<comment type="catalytic activity">
    <reaction evidence="3 4">
        <text>all-trans-beta-carotene + O2 = 2 all-trans-retinal</text>
        <dbReference type="Rhea" id="RHEA:32887"/>
        <dbReference type="ChEBI" id="CHEBI:15379"/>
        <dbReference type="ChEBI" id="CHEBI:17579"/>
        <dbReference type="ChEBI" id="CHEBI:17898"/>
        <dbReference type="EC" id="1.13.11.63"/>
    </reaction>
    <physiologicalReaction direction="left-to-right" evidence="6">
        <dbReference type="Rhea" id="RHEA:32888"/>
    </physiologicalReaction>
</comment>
<comment type="cofactor">
    <cofactor evidence="7">
        <name>Fe(2+)</name>
        <dbReference type="ChEBI" id="CHEBI:29033"/>
    </cofactor>
    <text evidence="7">Binds 1 Fe(2+) ion per subunit.</text>
</comment>
<comment type="biophysicochemical properties">
    <kinetics>
        <KM evidence="3">1.2 uM for all-trans-beta-carotene (at pH 8.0 and 37 degrees Celsius)</KM>
        <Vmax evidence="3">104.8 pmol/h/ug enzyme for the formation of all-trans-retinal (at pH 8.0 and 37 degrees Celsius)</Vmax>
    </kinetics>
</comment>
<comment type="pathway">
    <text evidence="6">Cofactor metabolism; retinol metabolism.</text>
</comment>
<comment type="subcellular location">
    <subcellularLocation>
        <location evidence="1">Cytoplasm</location>
        <location evidence="1">Cytosol</location>
    </subcellularLocation>
</comment>
<comment type="tissue specificity">
    <text evidence="3">Expressed in liver, kidney, small intestine and testis.</text>
</comment>
<comment type="developmental stage">
    <text evidence="3">Abundantly expressed at embryonic day 7 with lower levels at embryonic days 11, 13 and 15.</text>
</comment>
<comment type="similarity">
    <text evidence="5">Belongs to the carotenoid oxygenase family.</text>
</comment>
<dbReference type="EC" id="1.13.11.63" evidence="3 4"/>
<dbReference type="EMBL" id="AJ278064">
    <property type="protein sequence ID" value="CAB92531.2"/>
    <property type="molecule type" value="mRNA"/>
</dbReference>
<dbReference type="EMBL" id="AF271298">
    <property type="protein sequence ID" value="AAG33982.1"/>
    <property type="molecule type" value="mRNA"/>
</dbReference>
<dbReference type="EMBL" id="AF294899">
    <property type="protein sequence ID" value="AAG15381.1"/>
    <property type="molecule type" value="mRNA"/>
</dbReference>
<dbReference type="EMBL" id="AY114302">
    <property type="protein sequence ID" value="AAM76677.1"/>
    <property type="molecule type" value="Genomic_DNA"/>
</dbReference>
<dbReference type="EMBL" id="AY114294">
    <property type="protein sequence ID" value="AAM76677.1"/>
    <property type="status" value="JOINED"/>
    <property type="molecule type" value="Genomic_DNA"/>
</dbReference>
<dbReference type="EMBL" id="AY114295">
    <property type="protein sequence ID" value="AAM76677.1"/>
    <property type="status" value="JOINED"/>
    <property type="molecule type" value="Genomic_DNA"/>
</dbReference>
<dbReference type="EMBL" id="AY114296">
    <property type="protein sequence ID" value="AAM76677.1"/>
    <property type="status" value="JOINED"/>
    <property type="molecule type" value="Genomic_DNA"/>
</dbReference>
<dbReference type="EMBL" id="AY114297">
    <property type="protein sequence ID" value="AAM76677.1"/>
    <property type="status" value="JOINED"/>
    <property type="molecule type" value="Genomic_DNA"/>
</dbReference>
<dbReference type="EMBL" id="AY114298">
    <property type="protein sequence ID" value="AAM76677.1"/>
    <property type="status" value="JOINED"/>
    <property type="molecule type" value="Genomic_DNA"/>
</dbReference>
<dbReference type="EMBL" id="AY114299">
    <property type="protein sequence ID" value="AAM76677.1"/>
    <property type="status" value="JOINED"/>
    <property type="molecule type" value="Genomic_DNA"/>
</dbReference>
<dbReference type="EMBL" id="AY114300">
    <property type="protein sequence ID" value="AAM76677.1"/>
    <property type="status" value="JOINED"/>
    <property type="molecule type" value="Genomic_DNA"/>
</dbReference>
<dbReference type="EMBL" id="AY114301">
    <property type="protein sequence ID" value="AAM76677.1"/>
    <property type="status" value="JOINED"/>
    <property type="molecule type" value="Genomic_DNA"/>
</dbReference>
<dbReference type="EMBL" id="AK054171">
    <property type="protein sequence ID" value="BAC35679.1"/>
    <property type="molecule type" value="mRNA"/>
</dbReference>
<dbReference type="CCDS" id="CCDS22697.1"/>
<dbReference type="RefSeq" id="NP_067461.2">
    <property type="nucleotide sequence ID" value="NM_021486.3"/>
</dbReference>
<dbReference type="SMR" id="Q9JJS6"/>
<dbReference type="FunCoup" id="Q9JJS6">
    <property type="interactions" value="264"/>
</dbReference>
<dbReference type="STRING" id="10090.ENSMUSP00000034308"/>
<dbReference type="GlyGen" id="Q9JJS6">
    <property type="glycosylation" value="1 site"/>
</dbReference>
<dbReference type="iPTMnet" id="Q9JJS6"/>
<dbReference type="PhosphoSitePlus" id="Q9JJS6"/>
<dbReference type="PaxDb" id="10090-ENSMUSP00000034308"/>
<dbReference type="ProteomicsDB" id="277117"/>
<dbReference type="Antibodypedia" id="48219">
    <property type="antibodies" value="132 antibodies from 20 providers"/>
</dbReference>
<dbReference type="DNASU" id="63857"/>
<dbReference type="Ensembl" id="ENSMUST00000034308.16">
    <property type="protein sequence ID" value="ENSMUSP00000034308.9"/>
    <property type="gene ID" value="ENSMUSG00000031845.17"/>
</dbReference>
<dbReference type="GeneID" id="63857"/>
<dbReference type="KEGG" id="mmu:63857"/>
<dbReference type="UCSC" id="uc009now.2">
    <property type="organism name" value="mouse"/>
</dbReference>
<dbReference type="AGR" id="MGI:1926923"/>
<dbReference type="CTD" id="53630"/>
<dbReference type="MGI" id="MGI:1926923">
    <property type="gene designation" value="Bco1"/>
</dbReference>
<dbReference type="VEuPathDB" id="HostDB:ENSMUSG00000031845"/>
<dbReference type="eggNOG" id="KOG1285">
    <property type="taxonomic scope" value="Eukaryota"/>
</dbReference>
<dbReference type="GeneTree" id="ENSGT00950000182913"/>
<dbReference type="HOGENOM" id="CLU_016472_1_1_1"/>
<dbReference type="InParanoid" id="Q9JJS6"/>
<dbReference type="OMA" id="SCMAFHR"/>
<dbReference type="OrthoDB" id="407010at2759"/>
<dbReference type="PhylomeDB" id="Q9JJS6"/>
<dbReference type="TreeFam" id="TF314019"/>
<dbReference type="BRENDA" id="1.13.11.63">
    <property type="organism ID" value="3474"/>
</dbReference>
<dbReference type="Reactome" id="R-MMU-975634">
    <property type="pathway name" value="Retinoid metabolism and transport"/>
</dbReference>
<dbReference type="SABIO-RK" id="Q9JJS6"/>
<dbReference type="UniPathway" id="UPA00912"/>
<dbReference type="BioGRID-ORCS" id="63857">
    <property type="hits" value="1 hit in 79 CRISPR screens"/>
</dbReference>
<dbReference type="PRO" id="PR:Q9JJS6"/>
<dbReference type="Proteomes" id="UP000000589">
    <property type="component" value="Chromosome 8"/>
</dbReference>
<dbReference type="RNAct" id="Q9JJS6">
    <property type="molecule type" value="protein"/>
</dbReference>
<dbReference type="Bgee" id="ENSMUSG00000031845">
    <property type="expression patterns" value="Expressed in gastrula and 78 other cell types or tissues"/>
</dbReference>
<dbReference type="ExpressionAtlas" id="Q9JJS6">
    <property type="expression patterns" value="baseline and differential"/>
</dbReference>
<dbReference type="GO" id="GO:0005829">
    <property type="term" value="C:cytosol"/>
    <property type="evidence" value="ECO:0000250"/>
    <property type="project" value="UniProtKB"/>
</dbReference>
<dbReference type="GO" id="GO:0003834">
    <property type="term" value="F:beta-carotene 15,15'-dioxygenase activity"/>
    <property type="evidence" value="ECO:0000314"/>
    <property type="project" value="UniProtKB"/>
</dbReference>
<dbReference type="GO" id="GO:0046872">
    <property type="term" value="F:metal ion binding"/>
    <property type="evidence" value="ECO:0007669"/>
    <property type="project" value="UniProtKB-KW"/>
</dbReference>
<dbReference type="GO" id="GO:1901810">
    <property type="term" value="P:beta-carotene metabolic process"/>
    <property type="evidence" value="ECO:0000315"/>
    <property type="project" value="MGI"/>
</dbReference>
<dbReference type="GO" id="GO:0016121">
    <property type="term" value="P:carotene catabolic process"/>
    <property type="evidence" value="ECO:0000314"/>
    <property type="project" value="UniProtKB"/>
</dbReference>
<dbReference type="GO" id="GO:0042574">
    <property type="term" value="P:retinal metabolic process"/>
    <property type="evidence" value="ECO:0000315"/>
    <property type="project" value="UniProtKB"/>
</dbReference>
<dbReference type="GO" id="GO:0001523">
    <property type="term" value="P:retinoid metabolic process"/>
    <property type="evidence" value="ECO:0000314"/>
    <property type="project" value="UniProtKB"/>
</dbReference>
<dbReference type="GO" id="GO:0042572">
    <property type="term" value="P:retinol metabolic process"/>
    <property type="evidence" value="ECO:0007669"/>
    <property type="project" value="UniProtKB-UniPathway"/>
</dbReference>
<dbReference type="InterPro" id="IPR004294">
    <property type="entry name" value="Carotenoid_Oase"/>
</dbReference>
<dbReference type="PANTHER" id="PTHR10543:SF132">
    <property type="entry name" value="BETA,BETA-CAROTENE 15,15'-DIOXYGENASE"/>
    <property type="match status" value="1"/>
</dbReference>
<dbReference type="PANTHER" id="PTHR10543">
    <property type="entry name" value="BETA-CAROTENE DIOXYGENASE"/>
    <property type="match status" value="1"/>
</dbReference>
<dbReference type="Pfam" id="PF03055">
    <property type="entry name" value="RPE65"/>
    <property type="match status" value="1"/>
</dbReference>
<keyword id="KW-0963">Cytoplasm</keyword>
<keyword id="KW-0223">Dioxygenase</keyword>
<keyword id="KW-0408">Iron</keyword>
<keyword id="KW-0443">Lipid metabolism</keyword>
<keyword id="KW-0479">Metal-binding</keyword>
<keyword id="KW-0560">Oxidoreductase</keyword>
<keyword id="KW-1185">Reference proteome</keyword>